<gene>
    <name type="primary">CHI-B</name>
    <name type="synonym">PR3</name>
    <name type="ordered locus">At3g12500</name>
    <name type="ORF">MQC3.32</name>
    <name type="ORF">T2E22.18</name>
    <name type="ORF">T2E22_119</name>
</gene>
<feature type="signal peptide">
    <location>
        <begin position="1"/>
        <end position="33"/>
    </location>
</feature>
<feature type="chain" id="PRO_0000005287" description="Basic endochitinase B">
    <location>
        <begin position="34"/>
        <end position="328"/>
    </location>
</feature>
<feature type="propeptide" id="PRO_0000005288" description="Removed in mature form" evidence="9">
    <location>
        <begin position="329"/>
        <end position="335"/>
    </location>
</feature>
<feature type="domain" description="Chitin-binding type-1" evidence="3">
    <location>
        <begin position="34"/>
        <end position="75"/>
    </location>
</feature>
<feature type="short sequence motif" description="Vacuolar targeting signal" evidence="2">
    <location>
        <begin position="329"/>
        <end position="335"/>
    </location>
</feature>
<feature type="active site" description="Proton donor" evidence="1">
    <location>
        <position position="151"/>
    </location>
</feature>
<feature type="disulfide bond" evidence="3">
    <location>
        <begin position="36"/>
        <end position="51"/>
    </location>
</feature>
<feature type="disulfide bond" evidence="3">
    <location>
        <begin position="45"/>
        <end position="57"/>
    </location>
</feature>
<feature type="disulfide bond" evidence="3">
    <location>
        <begin position="50"/>
        <end position="64"/>
    </location>
</feature>
<feature type="disulfide bond" evidence="3">
    <location>
        <begin position="69"/>
        <end position="73"/>
    </location>
</feature>
<feature type="disulfide bond" evidence="3">
    <location>
        <begin position="107"/>
        <end position="169"/>
    </location>
</feature>
<feature type="disulfide bond" evidence="3">
    <location>
        <begin position="181"/>
        <end position="189"/>
    </location>
</feature>
<feature type="disulfide bond" evidence="3">
    <location>
        <begin position="288"/>
        <end position="320"/>
    </location>
</feature>
<feature type="sequence variant" description="In strain: cv. Bl-1, cv. Shokei and cv. Yo-0.">
    <original>N</original>
    <variation>K</variation>
    <location>
        <position position="17"/>
    </location>
</feature>
<feature type="sequence variant" description="In strain: cv. Aa-0.">
    <original>A</original>
    <variation>T</variation>
    <location>
        <position position="106"/>
    </location>
</feature>
<feature type="sequence variant" description="In strain: cv. Yo-0.">
    <original>G</original>
    <variation>S</variation>
    <location>
        <position position="127"/>
    </location>
</feature>
<feature type="sequence variant" description="In strain: cv. Ci-0.">
    <original>N</original>
    <variation>D</variation>
    <location>
        <position position="206"/>
    </location>
</feature>
<organism>
    <name type="scientific">Arabidopsis thaliana</name>
    <name type="common">Mouse-ear cress</name>
    <dbReference type="NCBI Taxonomy" id="3702"/>
    <lineage>
        <taxon>Eukaryota</taxon>
        <taxon>Viridiplantae</taxon>
        <taxon>Streptophyta</taxon>
        <taxon>Embryophyta</taxon>
        <taxon>Tracheophyta</taxon>
        <taxon>Spermatophyta</taxon>
        <taxon>Magnoliopsida</taxon>
        <taxon>eudicotyledons</taxon>
        <taxon>Gunneridae</taxon>
        <taxon>Pentapetalae</taxon>
        <taxon>rosids</taxon>
        <taxon>malvids</taxon>
        <taxon>Brassicales</taxon>
        <taxon>Brassicaceae</taxon>
        <taxon>Camelineae</taxon>
        <taxon>Arabidopsis</taxon>
    </lineage>
</organism>
<name>CHIB_ARATH</name>
<accession>P19171</accession>
<accession>Q9S7J5</accession>
<accession>Q9S838</accession>
<accession>Q9SXJ2</accession>
<accession>Q9SXJ3</accession>
<accession>Q9SXJ4</accession>
<dbReference type="EC" id="3.2.1.14"/>
<dbReference type="EMBL" id="M38240">
    <property type="protein sequence ID" value="AAA32769.1"/>
    <property type="molecule type" value="Genomic_DNA"/>
</dbReference>
<dbReference type="EMBL" id="AB023448">
    <property type="protein sequence ID" value="BAA82810.1"/>
    <property type="molecule type" value="Genomic_DNA"/>
</dbReference>
<dbReference type="EMBL" id="AB023449">
    <property type="protein sequence ID" value="BAA82811.1"/>
    <property type="molecule type" value="Genomic_DNA"/>
</dbReference>
<dbReference type="EMBL" id="AB023450">
    <property type="protein sequence ID" value="BAA82812.1"/>
    <property type="molecule type" value="Genomic_DNA"/>
</dbReference>
<dbReference type="EMBL" id="AB023451">
    <property type="protein sequence ID" value="BAA82813.1"/>
    <property type="molecule type" value="Genomic_DNA"/>
</dbReference>
<dbReference type="EMBL" id="AB023452">
    <property type="protein sequence ID" value="BAA82814.1"/>
    <property type="molecule type" value="Genomic_DNA"/>
</dbReference>
<dbReference type="EMBL" id="AB023453">
    <property type="protein sequence ID" value="BAA82815.1"/>
    <property type="molecule type" value="Genomic_DNA"/>
</dbReference>
<dbReference type="EMBL" id="AB023454">
    <property type="protein sequence ID" value="BAA82816.1"/>
    <property type="molecule type" value="Genomic_DNA"/>
</dbReference>
<dbReference type="EMBL" id="AB023455">
    <property type="protein sequence ID" value="BAA82817.1"/>
    <property type="molecule type" value="Genomic_DNA"/>
</dbReference>
<dbReference type="EMBL" id="AB023456">
    <property type="protein sequence ID" value="BAA82818.1"/>
    <property type="molecule type" value="Genomic_DNA"/>
</dbReference>
<dbReference type="EMBL" id="AB023457">
    <property type="protein sequence ID" value="BAA82819.1"/>
    <property type="molecule type" value="Genomic_DNA"/>
</dbReference>
<dbReference type="EMBL" id="AB023458">
    <property type="protein sequence ID" value="BAA82820.1"/>
    <property type="molecule type" value="Genomic_DNA"/>
</dbReference>
<dbReference type="EMBL" id="AB023459">
    <property type="protein sequence ID" value="BAA82821.1"/>
    <property type="molecule type" value="Genomic_DNA"/>
</dbReference>
<dbReference type="EMBL" id="AB023460">
    <property type="protein sequence ID" value="BAA82822.1"/>
    <property type="molecule type" value="Genomic_DNA"/>
</dbReference>
<dbReference type="EMBL" id="AB023461">
    <property type="protein sequence ID" value="BAA82823.1"/>
    <property type="molecule type" value="Genomic_DNA"/>
</dbReference>
<dbReference type="EMBL" id="AB023462">
    <property type="protein sequence ID" value="BAA82824.1"/>
    <property type="molecule type" value="Genomic_DNA"/>
</dbReference>
<dbReference type="EMBL" id="AB023463">
    <property type="protein sequence ID" value="BAA82825.1"/>
    <property type="molecule type" value="Genomic_DNA"/>
</dbReference>
<dbReference type="EMBL" id="AP002047">
    <property type="protein sequence ID" value="BAB03157.1"/>
    <property type="status" value="ALT_INIT"/>
    <property type="molecule type" value="Genomic_DNA"/>
</dbReference>
<dbReference type="EMBL" id="AC069474">
    <property type="protein sequence ID" value="AAG51023.1"/>
    <property type="molecule type" value="Genomic_DNA"/>
</dbReference>
<dbReference type="EMBL" id="CP002686">
    <property type="protein sequence ID" value="AEE75203.1"/>
    <property type="molecule type" value="Genomic_DNA"/>
</dbReference>
<dbReference type="EMBL" id="AY054628">
    <property type="protein sequence ID" value="AAK96819.1"/>
    <property type="status" value="ALT_INIT"/>
    <property type="molecule type" value="mRNA"/>
</dbReference>
<dbReference type="EMBL" id="AY081519">
    <property type="protein sequence ID" value="AAM10081.1"/>
    <property type="molecule type" value="mRNA"/>
</dbReference>
<dbReference type="PIR" id="B45511">
    <property type="entry name" value="B45511"/>
</dbReference>
<dbReference type="SMR" id="P19171"/>
<dbReference type="BioGRID" id="5763">
    <property type="interactions" value="2"/>
</dbReference>
<dbReference type="FunCoup" id="P19171">
    <property type="interactions" value="280"/>
</dbReference>
<dbReference type="STRING" id="3702.P19171"/>
<dbReference type="CAZy" id="CBM18">
    <property type="family name" value="Carbohydrate-Binding Module Family 18"/>
</dbReference>
<dbReference type="CAZy" id="GH19">
    <property type="family name" value="Glycoside Hydrolase Family 19"/>
</dbReference>
<dbReference type="GlyGen" id="P19171">
    <property type="glycosylation" value="2 sites"/>
</dbReference>
<dbReference type="PaxDb" id="3702-AT3G12500.1"/>
<dbReference type="ProteomicsDB" id="240890"/>
<dbReference type="EnsemblPlants" id="AT3G12500.1">
    <property type="protein sequence ID" value="AT3G12500.1"/>
    <property type="gene ID" value="AT3G12500"/>
</dbReference>
<dbReference type="GeneID" id="820429"/>
<dbReference type="Gramene" id="AT3G12500.1">
    <property type="protein sequence ID" value="AT3G12500.1"/>
    <property type="gene ID" value="AT3G12500"/>
</dbReference>
<dbReference type="KEGG" id="ath:AT3G12500"/>
<dbReference type="Araport" id="AT3G12500"/>
<dbReference type="TAIR" id="AT3G12500">
    <property type="gene designation" value="HCHIB"/>
</dbReference>
<dbReference type="eggNOG" id="KOG4742">
    <property type="taxonomic scope" value="Eukaryota"/>
</dbReference>
<dbReference type="HOGENOM" id="CLU_045506_1_0_1"/>
<dbReference type="InParanoid" id="P19171"/>
<dbReference type="OMA" id="GSDYCQP"/>
<dbReference type="OrthoDB" id="5985073at2759"/>
<dbReference type="PhylomeDB" id="P19171"/>
<dbReference type="BioCyc" id="ARA:AT3G12500-MONOMER"/>
<dbReference type="CD-CODE" id="4299E36E">
    <property type="entry name" value="Nucleolus"/>
</dbReference>
<dbReference type="PRO" id="PR:P19171"/>
<dbReference type="Proteomes" id="UP000006548">
    <property type="component" value="Chromosome 3"/>
</dbReference>
<dbReference type="ExpressionAtlas" id="P19171">
    <property type="expression patterns" value="baseline and differential"/>
</dbReference>
<dbReference type="GO" id="GO:0000325">
    <property type="term" value="C:plant-type vacuole"/>
    <property type="evidence" value="ECO:0007005"/>
    <property type="project" value="TAIR"/>
</dbReference>
<dbReference type="GO" id="GO:0099503">
    <property type="term" value="C:secretory vesicle"/>
    <property type="evidence" value="ECO:0007005"/>
    <property type="project" value="TAIR"/>
</dbReference>
<dbReference type="GO" id="GO:0005773">
    <property type="term" value="C:vacuole"/>
    <property type="evidence" value="ECO:0007005"/>
    <property type="project" value="TAIR"/>
</dbReference>
<dbReference type="GO" id="GO:0008061">
    <property type="term" value="F:chitin binding"/>
    <property type="evidence" value="ECO:0007669"/>
    <property type="project" value="UniProtKB-KW"/>
</dbReference>
<dbReference type="GO" id="GO:0008843">
    <property type="term" value="F:endochitinase activity"/>
    <property type="evidence" value="ECO:0007669"/>
    <property type="project" value="UniProtKB-EC"/>
</dbReference>
<dbReference type="GO" id="GO:0016998">
    <property type="term" value="P:cell wall macromolecule catabolic process"/>
    <property type="evidence" value="ECO:0007669"/>
    <property type="project" value="InterPro"/>
</dbReference>
<dbReference type="GO" id="GO:0006032">
    <property type="term" value="P:chitin catabolic process"/>
    <property type="evidence" value="ECO:0007669"/>
    <property type="project" value="UniProtKB-KW"/>
</dbReference>
<dbReference type="GO" id="GO:0050832">
    <property type="term" value="P:defense response to fungus"/>
    <property type="evidence" value="ECO:0007669"/>
    <property type="project" value="UniProtKB-KW"/>
</dbReference>
<dbReference type="GO" id="GO:0031640">
    <property type="term" value="P:killing of cells of another organism"/>
    <property type="evidence" value="ECO:0007669"/>
    <property type="project" value="UniProtKB-KW"/>
</dbReference>
<dbReference type="GO" id="GO:0009626">
    <property type="term" value="P:plant-type hypersensitive response"/>
    <property type="evidence" value="ECO:0007669"/>
    <property type="project" value="UniProtKB-KW"/>
</dbReference>
<dbReference type="GO" id="GO:0000272">
    <property type="term" value="P:polysaccharide catabolic process"/>
    <property type="evidence" value="ECO:0007669"/>
    <property type="project" value="UniProtKB-KW"/>
</dbReference>
<dbReference type="CDD" id="cd00325">
    <property type="entry name" value="chitinase_GH19"/>
    <property type="match status" value="1"/>
</dbReference>
<dbReference type="CDD" id="cd06921">
    <property type="entry name" value="ChtBD1_GH19_hevein"/>
    <property type="match status" value="1"/>
</dbReference>
<dbReference type="FunFam" id="3.30.60.10:FF:000001">
    <property type="entry name" value="Basic endochitinase"/>
    <property type="match status" value="1"/>
</dbReference>
<dbReference type="FunFam" id="3.30.20.10:FF:000001">
    <property type="entry name" value="Endochitinase (Chitinase)"/>
    <property type="match status" value="1"/>
</dbReference>
<dbReference type="Gene3D" id="1.10.530.10">
    <property type="match status" value="1"/>
</dbReference>
<dbReference type="Gene3D" id="3.30.20.10">
    <property type="entry name" value="Endochitinase, domain 2"/>
    <property type="match status" value="1"/>
</dbReference>
<dbReference type="Gene3D" id="3.30.60.10">
    <property type="entry name" value="Endochitinase-like"/>
    <property type="match status" value="1"/>
</dbReference>
<dbReference type="InterPro" id="IPR001002">
    <property type="entry name" value="Chitin-bd_1"/>
</dbReference>
<dbReference type="InterPro" id="IPR018371">
    <property type="entry name" value="Chitin-binding_1_CS"/>
</dbReference>
<dbReference type="InterPro" id="IPR036861">
    <property type="entry name" value="Endochitinase-like_sf"/>
</dbReference>
<dbReference type="InterPro" id="IPR016283">
    <property type="entry name" value="Glyco_hydro_19"/>
</dbReference>
<dbReference type="InterPro" id="IPR000726">
    <property type="entry name" value="Glyco_hydro_19_cat"/>
</dbReference>
<dbReference type="InterPro" id="IPR023346">
    <property type="entry name" value="Lysozyme-like_dom_sf"/>
</dbReference>
<dbReference type="PANTHER" id="PTHR22595:SF171">
    <property type="entry name" value="BASIC ENDOCHITINASE B"/>
    <property type="match status" value="1"/>
</dbReference>
<dbReference type="PANTHER" id="PTHR22595">
    <property type="entry name" value="CHITINASE-RELATED"/>
    <property type="match status" value="1"/>
</dbReference>
<dbReference type="Pfam" id="PF00187">
    <property type="entry name" value="Chitin_bind_1"/>
    <property type="match status" value="1"/>
</dbReference>
<dbReference type="Pfam" id="PF00182">
    <property type="entry name" value="Glyco_hydro_19"/>
    <property type="match status" value="1"/>
</dbReference>
<dbReference type="PIRSF" id="PIRSF001060">
    <property type="entry name" value="Endochitinase"/>
    <property type="match status" value="1"/>
</dbReference>
<dbReference type="PRINTS" id="PR00451">
    <property type="entry name" value="CHITINBINDNG"/>
</dbReference>
<dbReference type="SMART" id="SM00270">
    <property type="entry name" value="ChtBD1"/>
    <property type="match status" value="1"/>
</dbReference>
<dbReference type="SUPFAM" id="SSF53955">
    <property type="entry name" value="Lysozyme-like"/>
    <property type="match status" value="1"/>
</dbReference>
<dbReference type="SUPFAM" id="SSF57016">
    <property type="entry name" value="Plant lectins/antimicrobial peptides"/>
    <property type="match status" value="1"/>
</dbReference>
<dbReference type="PROSITE" id="PS00026">
    <property type="entry name" value="CHIT_BIND_I_1"/>
    <property type="match status" value="1"/>
</dbReference>
<dbReference type="PROSITE" id="PS50941">
    <property type="entry name" value="CHIT_BIND_I_2"/>
    <property type="match status" value="1"/>
</dbReference>
<dbReference type="PROSITE" id="PS00773">
    <property type="entry name" value="CHITINASE_19_1"/>
    <property type="match status" value="1"/>
</dbReference>
<dbReference type="PROSITE" id="PS00774">
    <property type="entry name" value="CHITINASE_19_2"/>
    <property type="match status" value="1"/>
</dbReference>
<proteinExistence type="evidence at protein level"/>
<reference key="1">
    <citation type="journal article" date="1990" name="Plant Physiol.">
        <title>Isolation and characterization of the genes encoding basic and acidic chitinase in Arabidopsis thaliana.</title>
        <authorList>
            <person name="Samac D.A."/>
            <person name="Hironaka C.M."/>
            <person name="Yallaly P.E."/>
            <person name="Shah D.M."/>
        </authorList>
    </citation>
    <scope>NUCLEOTIDE SEQUENCE [GENOMIC DNA]</scope>
    <scope>TISSUE SPECIFICITY</scope>
    <scope>INDUCTION</scope>
    <source>
        <strain>cv. Columbia</strain>
    </source>
</reference>
<reference key="2">
    <citation type="journal article" date="1999" name="Genetics">
        <title>DNA variation in the basic chitinase locus (ChiB) region of the wild plant Arabidopsis thaliana.</title>
        <authorList>
            <person name="Kawabe A."/>
            <person name="Miyashita N.T."/>
        </authorList>
    </citation>
    <scope>NUCLEOTIDE SEQUENCE [GENOMIC DNA]</scope>
    <scope>VARIANTS</scope>
    <source>
        <strain>cv. Aa-0</strain>
        <strain>cv. Al-0</strain>
        <strain>cv. Bl-1</strain>
        <strain>cv. Bla-10</strain>
        <strain>cv. Bs-1</strain>
        <strain>cv. Chi-0</strain>
        <strain>cv. Ci-0</strain>
        <strain>cv. Es-0</strain>
        <strain>cv. Gr-1</strain>
        <strain>cv. Hiroshima</strain>
        <strain>cv. Ita-0</strain>
        <strain>cv. Kn-0</strain>
        <strain>cv. Mt-0</strain>
        <strain>cv. Pog-0</strain>
        <strain>cv. Shokei</strain>
        <strain>cv. Yo-0</strain>
    </source>
</reference>
<reference key="3">
    <citation type="journal article" date="2000" name="DNA Res.">
        <title>Structural analysis of Arabidopsis thaliana chromosome 3. II. Sequence features of the 4,251,695 bp regions covered by 90 P1, TAC and BAC clones.</title>
        <authorList>
            <person name="Kaneko T."/>
            <person name="Katoh T."/>
            <person name="Sato S."/>
            <person name="Nakamura Y."/>
            <person name="Asamizu E."/>
            <person name="Tabata S."/>
        </authorList>
    </citation>
    <scope>NUCLEOTIDE SEQUENCE [LARGE SCALE GENOMIC DNA]</scope>
    <source>
        <strain>cv. Columbia</strain>
    </source>
</reference>
<reference key="4">
    <citation type="journal article" date="2000" name="Nature">
        <title>Sequence and analysis of chromosome 3 of the plant Arabidopsis thaliana.</title>
        <authorList>
            <person name="Salanoubat M."/>
            <person name="Lemcke K."/>
            <person name="Rieger M."/>
            <person name="Ansorge W."/>
            <person name="Unseld M."/>
            <person name="Fartmann B."/>
            <person name="Valle G."/>
            <person name="Bloecker H."/>
            <person name="Perez-Alonso M."/>
            <person name="Obermaier B."/>
            <person name="Delseny M."/>
            <person name="Boutry M."/>
            <person name="Grivell L.A."/>
            <person name="Mache R."/>
            <person name="Puigdomenech P."/>
            <person name="De Simone V."/>
            <person name="Choisne N."/>
            <person name="Artiguenave F."/>
            <person name="Robert C."/>
            <person name="Brottier P."/>
            <person name="Wincker P."/>
            <person name="Cattolico L."/>
            <person name="Weissenbach J."/>
            <person name="Saurin W."/>
            <person name="Quetier F."/>
            <person name="Schaefer M."/>
            <person name="Mueller-Auer S."/>
            <person name="Gabel C."/>
            <person name="Fuchs M."/>
            <person name="Benes V."/>
            <person name="Wurmbach E."/>
            <person name="Drzonek H."/>
            <person name="Erfle H."/>
            <person name="Jordan N."/>
            <person name="Bangert S."/>
            <person name="Wiedelmann R."/>
            <person name="Kranz H."/>
            <person name="Voss H."/>
            <person name="Holland R."/>
            <person name="Brandt P."/>
            <person name="Nyakatura G."/>
            <person name="Vezzi A."/>
            <person name="D'Angelo M."/>
            <person name="Pallavicini A."/>
            <person name="Toppo S."/>
            <person name="Simionati B."/>
            <person name="Conrad A."/>
            <person name="Hornischer K."/>
            <person name="Kauer G."/>
            <person name="Loehnert T.-H."/>
            <person name="Nordsiek G."/>
            <person name="Reichelt J."/>
            <person name="Scharfe M."/>
            <person name="Schoen O."/>
            <person name="Bargues M."/>
            <person name="Terol J."/>
            <person name="Climent J."/>
            <person name="Navarro P."/>
            <person name="Collado C."/>
            <person name="Perez-Perez A."/>
            <person name="Ottenwaelder B."/>
            <person name="Duchemin D."/>
            <person name="Cooke R."/>
            <person name="Laudie M."/>
            <person name="Berger-Llauro C."/>
            <person name="Purnelle B."/>
            <person name="Masuy D."/>
            <person name="de Haan M."/>
            <person name="Maarse A.C."/>
            <person name="Alcaraz J.-P."/>
            <person name="Cottet A."/>
            <person name="Casacuberta E."/>
            <person name="Monfort A."/>
            <person name="Argiriou A."/>
            <person name="Flores M."/>
            <person name="Liguori R."/>
            <person name="Vitale D."/>
            <person name="Mannhaupt G."/>
            <person name="Haase D."/>
            <person name="Schoof H."/>
            <person name="Rudd S."/>
            <person name="Zaccaria P."/>
            <person name="Mewes H.-W."/>
            <person name="Mayer K.F.X."/>
            <person name="Kaul S."/>
            <person name="Town C.D."/>
            <person name="Koo H.L."/>
            <person name="Tallon L.J."/>
            <person name="Jenkins J."/>
            <person name="Rooney T."/>
            <person name="Rizzo M."/>
            <person name="Walts A."/>
            <person name="Utterback T."/>
            <person name="Fujii C.Y."/>
            <person name="Shea T.P."/>
            <person name="Creasy T.H."/>
            <person name="Haas B."/>
            <person name="Maiti R."/>
            <person name="Wu D."/>
            <person name="Peterson J."/>
            <person name="Van Aken S."/>
            <person name="Pai G."/>
            <person name="Militscher J."/>
            <person name="Sellers P."/>
            <person name="Gill J.E."/>
            <person name="Feldblyum T.V."/>
            <person name="Preuss D."/>
            <person name="Lin X."/>
            <person name="Nierman W.C."/>
            <person name="Salzberg S.L."/>
            <person name="White O."/>
            <person name="Venter J.C."/>
            <person name="Fraser C.M."/>
            <person name="Kaneko T."/>
            <person name="Nakamura Y."/>
            <person name="Sato S."/>
            <person name="Kato T."/>
            <person name="Asamizu E."/>
            <person name="Sasamoto S."/>
            <person name="Kimura T."/>
            <person name="Idesawa K."/>
            <person name="Kawashima K."/>
            <person name="Kishida Y."/>
            <person name="Kiyokawa C."/>
            <person name="Kohara M."/>
            <person name="Matsumoto M."/>
            <person name="Matsuno A."/>
            <person name="Muraki A."/>
            <person name="Nakayama S."/>
            <person name="Nakazaki N."/>
            <person name="Shinpo S."/>
            <person name="Takeuchi C."/>
            <person name="Wada T."/>
            <person name="Watanabe A."/>
            <person name="Yamada M."/>
            <person name="Yasuda M."/>
            <person name="Tabata S."/>
        </authorList>
    </citation>
    <scope>NUCLEOTIDE SEQUENCE [LARGE SCALE GENOMIC DNA]</scope>
    <source>
        <strain>cv. Columbia</strain>
    </source>
</reference>
<reference key="5">
    <citation type="journal article" date="2017" name="Plant J.">
        <title>Araport11: a complete reannotation of the Arabidopsis thaliana reference genome.</title>
        <authorList>
            <person name="Cheng C.Y."/>
            <person name="Krishnakumar V."/>
            <person name="Chan A.P."/>
            <person name="Thibaud-Nissen F."/>
            <person name="Schobel S."/>
            <person name="Town C.D."/>
        </authorList>
    </citation>
    <scope>GENOME REANNOTATION</scope>
    <source>
        <strain>cv. Columbia</strain>
    </source>
</reference>
<reference key="6">
    <citation type="journal article" date="2003" name="Science">
        <title>Empirical analysis of transcriptional activity in the Arabidopsis genome.</title>
        <authorList>
            <person name="Yamada K."/>
            <person name="Lim J."/>
            <person name="Dale J.M."/>
            <person name="Chen H."/>
            <person name="Shinn P."/>
            <person name="Palm C.J."/>
            <person name="Southwick A.M."/>
            <person name="Wu H.C."/>
            <person name="Kim C.J."/>
            <person name="Nguyen M."/>
            <person name="Pham P.K."/>
            <person name="Cheuk R.F."/>
            <person name="Karlin-Newmann G."/>
            <person name="Liu S.X."/>
            <person name="Lam B."/>
            <person name="Sakano H."/>
            <person name="Wu T."/>
            <person name="Yu G."/>
            <person name="Miranda M."/>
            <person name="Quach H.L."/>
            <person name="Tripp M."/>
            <person name="Chang C.H."/>
            <person name="Lee J.M."/>
            <person name="Toriumi M.J."/>
            <person name="Chan M.M."/>
            <person name="Tang C.C."/>
            <person name="Onodera C.S."/>
            <person name="Deng J.M."/>
            <person name="Akiyama K."/>
            <person name="Ansari Y."/>
            <person name="Arakawa T."/>
            <person name="Banh J."/>
            <person name="Banno F."/>
            <person name="Bowser L."/>
            <person name="Brooks S.Y."/>
            <person name="Carninci P."/>
            <person name="Chao Q."/>
            <person name="Choy N."/>
            <person name="Enju A."/>
            <person name="Goldsmith A.D."/>
            <person name="Gurjal M."/>
            <person name="Hansen N.F."/>
            <person name="Hayashizaki Y."/>
            <person name="Johnson-Hopson C."/>
            <person name="Hsuan V.W."/>
            <person name="Iida K."/>
            <person name="Karnes M."/>
            <person name="Khan S."/>
            <person name="Koesema E."/>
            <person name="Ishida J."/>
            <person name="Jiang P.X."/>
            <person name="Jones T."/>
            <person name="Kawai J."/>
            <person name="Kamiya A."/>
            <person name="Meyers C."/>
            <person name="Nakajima M."/>
            <person name="Narusaka M."/>
            <person name="Seki M."/>
            <person name="Sakurai T."/>
            <person name="Satou M."/>
            <person name="Tamse R."/>
            <person name="Vaysberg M."/>
            <person name="Wallender E.K."/>
            <person name="Wong C."/>
            <person name="Yamamura Y."/>
            <person name="Yuan S."/>
            <person name="Shinozaki K."/>
            <person name="Davis R.W."/>
            <person name="Theologis A."/>
            <person name="Ecker J.R."/>
        </authorList>
    </citation>
    <scope>NUCLEOTIDE SEQUENCE [LARGE SCALE MRNA] OF 9-335</scope>
    <source>
        <strain>cv. Columbia</strain>
    </source>
</reference>
<reference key="7">
    <citation type="journal article" date="1991" name="Plant Physiol.">
        <title>Purification and characterization of an antifungal chitinase from Arabidopsis thaliana.</title>
        <authorList>
            <person name="Verburg J.G."/>
            <person name="Huynh Q.K."/>
        </authorList>
    </citation>
    <scope>PROTEIN SEQUENCE OF 237-256</scope>
    <scope>ANTIFUNGAL ACTIVITY</scope>
</reference>
<reference key="8">
    <citation type="journal article" date="1995" name="Plant Physiol.">
        <title>Analysis of ethylene signal-transduction kinetics associated with seedling-growth response and chitinase induction in wild-type and mutant Arabidopsis.</title>
        <authorList>
            <person name="Chen Q.G."/>
            <person name="Bleecker A.B."/>
        </authorList>
    </citation>
    <scope>INDUCTION</scope>
</reference>
<reference key="9">
    <citation type="journal article" date="1998" name="Proc. Natl. Acad. Sci. U.S.A.">
        <title>Separate jasmonate-dependent and salicylate-dependent defense-response pathways in Arabidopsis are essential for resistance to distinct microbial pathogens.</title>
        <authorList>
            <person name="Thomma B.P.H.J."/>
            <person name="Eggermont K."/>
            <person name="Penninckx I.A.M.A."/>
            <person name="Mauch-Mani B."/>
            <person name="Vogelsang R."/>
            <person name="Cammue B.P.A."/>
            <person name="Broekaert W.F."/>
        </authorList>
    </citation>
    <scope>FUNCTION</scope>
    <scope>INDUCTION</scope>
</reference>
<reference key="10">
    <citation type="journal article" date="1999" name="Plant Mol. Biol.">
        <title>Rhizobacteria-mediated induced systemic resistance (ISR) in Arabidopsis is not associated with a direct effect on expression of known defense-related genes but stimulates the expression of the jasmonate-inducible gene Atvsp upon challenge.</title>
        <authorList>
            <person name="van Wees S.C."/>
            <person name="Luijendijk M."/>
            <person name="Smoorenburg I."/>
            <person name="van Loon L.C."/>
            <person name="Pieterse C.M."/>
        </authorList>
    </citation>
    <scope>INDUCTION</scope>
</reference>
<reference key="11">
    <citation type="journal article" date="2013" name="Plant J.">
        <title>An in vivo expression system for the identification of cargo proteins of vacuolar sorting receptors in Arabidopsis culture cells.</title>
        <authorList>
            <person name="Shen J."/>
            <person name="Suen P.K."/>
            <person name="Wang X."/>
            <person name="Lin Y."/>
            <person name="Lo S.W."/>
            <person name="Rojo E."/>
            <person name="Jiang L."/>
        </authorList>
    </citation>
    <scope>SUBCELLULAR LOCATION</scope>
</reference>
<protein>
    <recommendedName>
        <fullName>Basic endochitinase B</fullName>
        <ecNumber>3.2.1.14</ecNumber>
    </recommendedName>
    <alternativeName>
        <fullName>Pathogenesis-related protein 3</fullName>
        <shortName>AtChiB</shortName>
        <shortName>PR-3</shortName>
    </alternativeName>
</protein>
<evidence type="ECO:0000250" key="1">
    <source>
        <dbReference type="UniProtKB" id="P29022"/>
    </source>
</evidence>
<evidence type="ECO:0000255" key="2"/>
<evidence type="ECO:0000255" key="3">
    <source>
        <dbReference type="PROSITE-ProRule" id="PRU00261"/>
    </source>
</evidence>
<evidence type="ECO:0000269" key="4">
    <source>
    </source>
</evidence>
<evidence type="ECO:0000269" key="5">
    <source>
    </source>
</evidence>
<evidence type="ECO:0000269" key="6">
    <source>
    </source>
</evidence>
<evidence type="ECO:0000269" key="7">
    <source>
    </source>
</evidence>
<evidence type="ECO:0000269" key="8">
    <source>
    </source>
</evidence>
<evidence type="ECO:0000305" key="9"/>
<keyword id="KW-0929">Antimicrobial</keyword>
<keyword id="KW-0119">Carbohydrate metabolism</keyword>
<keyword id="KW-0146">Chitin degradation</keyword>
<keyword id="KW-0147">Chitin-binding</keyword>
<keyword id="KW-0903">Direct protein sequencing</keyword>
<keyword id="KW-1015">Disulfide bond</keyword>
<keyword id="KW-0295">Fungicide</keyword>
<keyword id="KW-0326">Glycosidase</keyword>
<keyword id="KW-0378">Hydrolase</keyword>
<keyword id="KW-0381">Hypersensitive response</keyword>
<keyword id="KW-0611">Plant defense</keyword>
<keyword id="KW-0624">Polysaccharide degradation</keyword>
<keyword id="KW-1185">Reference proteome</keyword>
<keyword id="KW-0732">Signal</keyword>
<keyword id="KW-0926">Vacuole</keyword>
<comment type="function">
    <text evidence="8">Defense against chitin-containing fungal pathogens. Seems particularly implicated in resistance to jasmonate-inducing pathogens such as A.brassicicola. In vitro antifungal activity against T.reesei, but not against A.solani, F.oxysporum, S.sclerotiorum, G.graminis and P.megasperma.</text>
</comment>
<comment type="catalytic activity">
    <reaction>
        <text>Random endo-hydrolysis of N-acetyl-beta-D-glucosaminide (1-&gt;4)-beta-linkages in chitin and chitodextrins.</text>
        <dbReference type="EC" id="3.2.1.14"/>
    </reaction>
</comment>
<comment type="subcellular location">
    <subcellularLocation>
        <location evidence="6">Vacuole</location>
    </subcellularLocation>
</comment>
<comment type="tissue specificity">
    <text evidence="5">High constitutive level in roots with lower levels in leaves and flowering shoots.</text>
</comment>
<comment type="induction">
    <text evidence="4 5 7 8">Ethylene induces high levels of systemic expression of basic chitinase with expression increasing with plant age. Locally and systemically induced by jasmonic acid (JA) and pathogens such as A.brassicicola and P.syringae, particularly in case of hypersensitive responses (HR). Not induced by wounding.</text>
</comment>
<comment type="similarity">
    <text evidence="9">Belongs to the glycosyl hydrolase 19 family. Chitinase class I subfamily.</text>
</comment>
<comment type="sequence caution" evidence="9">
    <conflict type="erroneous initiation">
        <sequence resource="EMBL-CDS" id="AAK96819"/>
    </conflict>
    <text>Truncated N-terminus.</text>
</comment>
<comment type="sequence caution" evidence="9">
    <conflict type="erroneous initiation">
        <sequence resource="EMBL-CDS" id="BAB03157"/>
    </conflict>
    <text>Truncated N-terminus.</text>
</comment>
<sequence length="335" mass="36184">MPPQKENHRTLNKMKTNLFLFLIFSLLLSLSSAEQCGRQAGGALCPNGLCCSEFGWCGNTEPYCKQPGCQSQCTPGGTPPGPTGDLSGIISSSQFDDMLKHRNDAACPARGFYTYNAFITAAKSFPGFGTTGDTATRKKEVAAFFGQTSHETTGGWATAPDGPYSWGYCFKQEQNPASDYCEPSATWPCASGKRYYGRGPMQLSWNYNYGLCGRAIGVDLLNNPDLVANDAVIAFKAAIWFWMTAQPPKPSCHAVIAGQWQPSDADRAAGRLPGYGVITNIINGGLECGRGQDGRVADRIGFYQRYCNIFGVNPGGNLDCYNQRSFVNGLLEAAI</sequence>